<comment type="function">
    <text evidence="2 4">Purine nucleoside enzyme that catalyzes the phosphorolysis of adenosine and inosine nucleosides, yielding D-ribose 1-phosphate and the respective free bases, adenine and hypoxanthine (PubMed:31978345). Also catalyzes the phosphorolysis of S-methyl-5'-thioadenosine into adenine and S-methyl-5-thio-alpha-D-ribose 1-phosphate (PubMed:31978345). Also has adenosine deaminase activity (PubMed:31978345). May also act as a polyphenol oxidase: able to oxidize syringaldazine and 2,2'-azino-bis(3-ethylbenzthiazoline-6-sulfonic acid) (ABTS) in vitro (PubMed:16740638).</text>
</comment>
<comment type="catalytic activity">
    <reaction evidence="4">
        <text>adenosine + phosphate = alpha-D-ribose 1-phosphate + adenine</text>
        <dbReference type="Rhea" id="RHEA:27642"/>
        <dbReference type="ChEBI" id="CHEBI:16335"/>
        <dbReference type="ChEBI" id="CHEBI:16708"/>
        <dbReference type="ChEBI" id="CHEBI:43474"/>
        <dbReference type="ChEBI" id="CHEBI:57720"/>
        <dbReference type="EC" id="2.4.2.1"/>
    </reaction>
    <physiologicalReaction direction="left-to-right" evidence="4">
        <dbReference type="Rhea" id="RHEA:27643"/>
    </physiologicalReaction>
</comment>
<comment type="catalytic activity">
    <reaction evidence="4">
        <text>S-methyl-5'-thioadenosine + phosphate = 5-(methylsulfanyl)-alpha-D-ribose 1-phosphate + adenine</text>
        <dbReference type="Rhea" id="RHEA:11852"/>
        <dbReference type="ChEBI" id="CHEBI:16708"/>
        <dbReference type="ChEBI" id="CHEBI:17509"/>
        <dbReference type="ChEBI" id="CHEBI:43474"/>
        <dbReference type="ChEBI" id="CHEBI:58533"/>
        <dbReference type="EC" id="2.4.2.28"/>
    </reaction>
    <physiologicalReaction direction="left-to-right" evidence="4">
        <dbReference type="Rhea" id="RHEA:11853"/>
    </physiologicalReaction>
</comment>
<comment type="catalytic activity">
    <reaction evidence="4">
        <text>inosine + phosphate = alpha-D-ribose 1-phosphate + hypoxanthine</text>
        <dbReference type="Rhea" id="RHEA:27646"/>
        <dbReference type="ChEBI" id="CHEBI:17368"/>
        <dbReference type="ChEBI" id="CHEBI:17596"/>
        <dbReference type="ChEBI" id="CHEBI:43474"/>
        <dbReference type="ChEBI" id="CHEBI:57720"/>
        <dbReference type="EC" id="2.4.2.1"/>
    </reaction>
    <physiologicalReaction direction="left-to-right" evidence="4">
        <dbReference type="Rhea" id="RHEA:27647"/>
    </physiologicalReaction>
</comment>
<comment type="catalytic activity">
    <reaction evidence="4">
        <text>adenosine + H2O + H(+) = inosine + NH4(+)</text>
        <dbReference type="Rhea" id="RHEA:24408"/>
        <dbReference type="ChEBI" id="CHEBI:15377"/>
        <dbReference type="ChEBI" id="CHEBI:15378"/>
        <dbReference type="ChEBI" id="CHEBI:16335"/>
        <dbReference type="ChEBI" id="CHEBI:17596"/>
        <dbReference type="ChEBI" id="CHEBI:28938"/>
        <dbReference type="EC" id="3.5.4.4"/>
    </reaction>
    <physiologicalReaction direction="left-to-right" evidence="4">
        <dbReference type="Rhea" id="RHEA:24409"/>
    </physiologicalReaction>
</comment>
<comment type="cofactor">
    <cofactor evidence="2">
        <name>Cu(2+)</name>
        <dbReference type="ChEBI" id="CHEBI:29036"/>
    </cofactor>
    <cofactor evidence="1">
        <name>Zn(2+)</name>
        <dbReference type="ChEBI" id="CHEBI:29105"/>
    </cofactor>
</comment>
<comment type="biophysicochemical properties">
    <kinetics>
        <KM evidence="2">23 uM for 2,2'-azino-bis(3-ethylbenzthiazoline-6-sulfonic acid) (at pH 4.5 and 40 degrees Celsius)</KM>
        <KM evidence="2">1.1 uM for syringaldazine (at pH 4.5 and 40 degrees Celsius)</KM>
        <text evidence="2">kcat is 1450 min(-1) with 2,2'-azino-bis(3-ethylbenzthiazoline-6-sulfonic acid) as substrate. kcat is 21720 min(-1) with syringaldazine as substrate (at pH 4.5 and 40 degrees Celsius).</text>
    </kinetics>
    <phDependence>
        <text evidence="2">Optimum pH is 5.5-8.4. Maintains 80% activity at pH 5.0-9.0.</text>
    </phDependence>
    <temperatureDependence>
        <text evidence="2">Optimum temperature is 44 degrees Celsius. Maintains more than 80% activity at 50 degrees Celsius.</text>
    </temperatureDependence>
</comment>
<comment type="subunit">
    <text evidence="2">Homodimer.</text>
</comment>
<comment type="disruption phenotype">
    <text evidence="3">Cells lacking this gene are more sensitive to ampicillin, cephradine and cefoxitin than wild-type.</text>
</comment>
<comment type="similarity">
    <text evidence="6">Belongs to the purine nucleoside phosphorylase YfiH/LACC1 family.</text>
</comment>
<evidence type="ECO:0000250" key="1">
    <source>
        <dbReference type="UniProtKB" id="P84138"/>
    </source>
</evidence>
<evidence type="ECO:0000269" key="2">
    <source>
    </source>
</evidence>
<evidence type="ECO:0000269" key="3">
    <source>
    </source>
</evidence>
<evidence type="ECO:0000269" key="4">
    <source>
    </source>
</evidence>
<evidence type="ECO:0000303" key="5">
    <source>
    </source>
</evidence>
<evidence type="ECO:0000305" key="6"/>
<evidence type="ECO:0000312" key="7">
    <source>
        <dbReference type="EMBL" id="AAC75642.1"/>
    </source>
</evidence>
<evidence type="ECO:0007829" key="8">
    <source>
        <dbReference type="PDB" id="7F3V"/>
    </source>
</evidence>
<evidence type="ECO:0007829" key="9">
    <source>
        <dbReference type="PDB" id="7W1G"/>
    </source>
</evidence>
<name>PURNU_ECOLI</name>
<accession>P33644</accession>
<accession>Q46989</accession>
<proteinExistence type="evidence at protein level"/>
<keyword id="KW-0002">3D-structure</keyword>
<keyword id="KW-0186">Copper</keyword>
<keyword id="KW-0378">Hydrolase</keyword>
<keyword id="KW-0479">Metal-binding</keyword>
<keyword id="KW-0560">Oxidoreductase</keyword>
<keyword id="KW-1185">Reference proteome</keyword>
<keyword id="KW-0808">Transferase</keyword>
<keyword id="KW-0862">Zinc</keyword>
<feature type="chain" id="PRO_0000163163" description="Purine nucleoside phosphorylase YfiH">
    <location>
        <begin position="1"/>
        <end position="243"/>
    </location>
</feature>
<feature type="binding site" evidence="1">
    <location>
        <position position="71"/>
    </location>
    <ligand>
        <name>Zn(2+)</name>
        <dbReference type="ChEBI" id="CHEBI:29105"/>
        <note>catalytic</note>
    </ligand>
</feature>
<feature type="binding site" evidence="1">
    <location>
        <position position="107"/>
    </location>
    <ligand>
        <name>Zn(2+)</name>
        <dbReference type="ChEBI" id="CHEBI:29105"/>
        <note>catalytic</note>
    </ligand>
</feature>
<feature type="binding site" evidence="1">
    <location>
        <position position="124"/>
    </location>
    <ligand>
        <name>Zn(2+)</name>
        <dbReference type="ChEBI" id="CHEBI:29105"/>
        <note>catalytic</note>
    </ligand>
</feature>
<feature type="sequence conflict" description="In Ref. 1; AAA92958." evidence="6" ref="1">
    <original>S</original>
    <variation>T</variation>
    <location>
        <position position="27"/>
    </location>
</feature>
<feature type="strand" evidence="8">
    <location>
        <begin position="15"/>
        <end position="20"/>
    </location>
</feature>
<feature type="turn" evidence="9">
    <location>
        <begin position="32"/>
        <end position="34"/>
    </location>
</feature>
<feature type="strand" evidence="8">
    <location>
        <begin position="38"/>
        <end position="41"/>
    </location>
</feature>
<feature type="helix" evidence="8">
    <location>
        <begin position="44"/>
        <end position="58"/>
    </location>
</feature>
<feature type="strand" evidence="8">
    <location>
        <begin position="75"/>
        <end position="77"/>
    </location>
</feature>
<feature type="strand" evidence="8">
    <location>
        <begin position="89"/>
        <end position="93"/>
    </location>
</feature>
<feature type="strand" evidence="8">
    <location>
        <begin position="99"/>
        <end position="114"/>
    </location>
</feature>
<feature type="strand" evidence="8">
    <location>
        <begin position="120"/>
        <end position="125"/>
    </location>
</feature>
<feature type="helix" evidence="8">
    <location>
        <begin position="127"/>
        <end position="132"/>
    </location>
</feature>
<feature type="helix" evidence="8">
    <location>
        <begin position="134"/>
        <end position="140"/>
    </location>
</feature>
<feature type="helix" evidence="8">
    <location>
        <begin position="146"/>
        <end position="148"/>
    </location>
</feature>
<feature type="strand" evidence="8">
    <location>
        <begin position="149"/>
        <end position="153"/>
    </location>
</feature>
<feature type="turn" evidence="8">
    <location>
        <begin position="159"/>
        <end position="161"/>
    </location>
</feature>
<feature type="helix" evidence="8">
    <location>
        <begin position="166"/>
        <end position="175"/>
    </location>
</feature>
<feature type="helix" evidence="8">
    <location>
        <begin position="177"/>
        <end position="182"/>
    </location>
</feature>
<feature type="strand" evidence="8">
    <location>
        <begin position="183"/>
        <end position="186"/>
    </location>
</feature>
<feature type="strand" evidence="8">
    <location>
        <begin position="189"/>
        <end position="192"/>
    </location>
</feature>
<feature type="helix" evidence="8">
    <location>
        <begin position="194"/>
        <end position="204"/>
    </location>
</feature>
<feature type="strand" evidence="8">
    <location>
        <begin position="209"/>
        <end position="212"/>
    </location>
</feature>
<feature type="turn" evidence="8">
    <location>
        <begin position="217"/>
        <end position="219"/>
    </location>
</feature>
<feature type="turn" evidence="8">
    <location>
        <begin position="221"/>
        <end position="223"/>
    </location>
</feature>
<feature type="helix" evidence="8">
    <location>
        <begin position="227"/>
        <end position="230"/>
    </location>
</feature>
<feature type="strand" evidence="8">
    <location>
        <begin position="236"/>
        <end position="242"/>
    </location>
</feature>
<dbReference type="EC" id="2.4.2.1" evidence="4"/>
<dbReference type="EC" id="3.5.4.4" evidence="4"/>
<dbReference type="EC" id="1.10.3.-" evidence="2"/>
<dbReference type="EC" id="2.4.2.28" evidence="4"/>
<dbReference type="EMBL" id="U50134">
    <property type="protein sequence ID" value="AAA92958.1"/>
    <property type="molecule type" value="Genomic_DNA"/>
</dbReference>
<dbReference type="EMBL" id="X57620">
    <property type="status" value="NOT_ANNOTATED_CDS"/>
    <property type="molecule type" value="Genomic_DNA"/>
</dbReference>
<dbReference type="EMBL" id="U00096">
    <property type="protein sequence ID" value="AAC75642.1"/>
    <property type="molecule type" value="Genomic_DNA"/>
</dbReference>
<dbReference type="EMBL" id="AP009048">
    <property type="protein sequence ID" value="BAA16477.1"/>
    <property type="molecule type" value="Genomic_DNA"/>
</dbReference>
<dbReference type="EMBL" id="M29364">
    <property type="protein sequence ID" value="AAA24421.1"/>
    <property type="status" value="ALT_SEQ"/>
    <property type="molecule type" value="Genomic_DNA"/>
</dbReference>
<dbReference type="PIR" id="D65037">
    <property type="entry name" value="D65037"/>
</dbReference>
<dbReference type="RefSeq" id="NP_417084.1">
    <property type="nucleotide sequence ID" value="NC_000913.3"/>
</dbReference>
<dbReference type="RefSeq" id="WP_000040169.1">
    <property type="nucleotide sequence ID" value="NZ_LN832404.1"/>
</dbReference>
<dbReference type="PDB" id="1Z9T">
    <property type="method" value="X-ray"/>
    <property type="resolution" value="1.54 A"/>
    <property type="chains" value="A=1-243"/>
</dbReference>
<dbReference type="PDB" id="7F3V">
    <property type="method" value="X-ray"/>
    <property type="resolution" value="1.47 A"/>
    <property type="chains" value="A/B/C/D=1-243"/>
</dbReference>
<dbReference type="PDB" id="7W1G">
    <property type="method" value="X-ray"/>
    <property type="resolution" value="1.86 A"/>
    <property type="chains" value="A/B/C/D=1-243"/>
</dbReference>
<dbReference type="PDBsum" id="1Z9T"/>
<dbReference type="PDBsum" id="7F3V"/>
<dbReference type="PDBsum" id="7W1G"/>
<dbReference type="SMR" id="P33644"/>
<dbReference type="BioGRID" id="4260619">
    <property type="interactions" value="660"/>
</dbReference>
<dbReference type="FunCoup" id="P33644">
    <property type="interactions" value="598"/>
</dbReference>
<dbReference type="IntAct" id="P33644">
    <property type="interactions" value="8"/>
</dbReference>
<dbReference type="STRING" id="511145.b2593"/>
<dbReference type="DrugBank" id="DB04272">
    <property type="generic name" value="Citric acid"/>
</dbReference>
<dbReference type="jPOST" id="P33644"/>
<dbReference type="PaxDb" id="511145-b2593"/>
<dbReference type="DNASU" id="947089"/>
<dbReference type="EnsemblBacteria" id="AAC75642">
    <property type="protein sequence ID" value="AAC75642"/>
    <property type="gene ID" value="b2593"/>
</dbReference>
<dbReference type="GeneID" id="947089"/>
<dbReference type="KEGG" id="ecj:JW2575"/>
<dbReference type="KEGG" id="eco:b2593"/>
<dbReference type="KEGG" id="ecoc:C3026_14370"/>
<dbReference type="PATRIC" id="fig|511145.12.peg.2693"/>
<dbReference type="EchoBASE" id="EB2021"/>
<dbReference type="eggNOG" id="COG1496">
    <property type="taxonomic scope" value="Bacteria"/>
</dbReference>
<dbReference type="HOGENOM" id="CLU_065784_1_1_6"/>
<dbReference type="InParanoid" id="P33644"/>
<dbReference type="OMA" id="GWKGALT"/>
<dbReference type="OrthoDB" id="4279at2"/>
<dbReference type="PhylomeDB" id="P33644"/>
<dbReference type="BioCyc" id="EcoCyc:EG12097-MONOMER"/>
<dbReference type="BioCyc" id="MetaCyc:EG12097-MONOMER"/>
<dbReference type="SABIO-RK" id="P33644"/>
<dbReference type="EvolutionaryTrace" id="P33644"/>
<dbReference type="PRO" id="PR:P33644"/>
<dbReference type="Proteomes" id="UP000000625">
    <property type="component" value="Chromosome"/>
</dbReference>
<dbReference type="GO" id="GO:0005829">
    <property type="term" value="C:cytosol"/>
    <property type="evidence" value="ECO:0000314"/>
    <property type="project" value="EcoCyc"/>
</dbReference>
<dbReference type="GO" id="GO:0030288">
    <property type="term" value="C:outer membrane-bounded periplasmic space"/>
    <property type="evidence" value="ECO:0000314"/>
    <property type="project" value="EcoCyc"/>
</dbReference>
<dbReference type="GO" id="GO:0004000">
    <property type="term" value="F:adenosine deaminase activity"/>
    <property type="evidence" value="ECO:0000314"/>
    <property type="project" value="UniProtKB"/>
</dbReference>
<dbReference type="GO" id="GO:0005507">
    <property type="term" value="F:copper ion binding"/>
    <property type="evidence" value="ECO:0000314"/>
    <property type="project" value="EcoCyc"/>
</dbReference>
<dbReference type="GO" id="GO:0016682">
    <property type="term" value="F:oxidoreductase activity, acting on diphenols and related substances as donors, oxygen as acceptor"/>
    <property type="evidence" value="ECO:0000314"/>
    <property type="project" value="UniProtKB"/>
</dbReference>
<dbReference type="GO" id="GO:0042803">
    <property type="term" value="F:protein homodimerization activity"/>
    <property type="evidence" value="ECO:0000314"/>
    <property type="project" value="UniProtKB"/>
</dbReference>
<dbReference type="GO" id="GO:0004731">
    <property type="term" value="F:purine-nucleoside phosphorylase activity"/>
    <property type="evidence" value="ECO:0000314"/>
    <property type="project" value="UniProtKB"/>
</dbReference>
<dbReference type="GO" id="GO:0017061">
    <property type="term" value="F:S-methyl-5-thioadenosine phosphorylase activity"/>
    <property type="evidence" value="ECO:0000314"/>
    <property type="project" value="UniProtKB"/>
</dbReference>
<dbReference type="GO" id="GO:0000270">
    <property type="term" value="P:peptidoglycan metabolic process"/>
    <property type="evidence" value="ECO:0000315"/>
    <property type="project" value="EcoCyc"/>
</dbReference>
<dbReference type="CDD" id="cd16833">
    <property type="entry name" value="YfiH"/>
    <property type="match status" value="1"/>
</dbReference>
<dbReference type="FunFam" id="3.60.140.10:FF:000001">
    <property type="entry name" value="Polyphenol oxidase"/>
    <property type="match status" value="1"/>
</dbReference>
<dbReference type="Gene3D" id="3.60.140.10">
    <property type="entry name" value="CNF1/YfiH-like putative cysteine hydrolases"/>
    <property type="match status" value="1"/>
</dbReference>
<dbReference type="InterPro" id="IPR003730">
    <property type="entry name" value="Cu_polyphenol_OxRdtase"/>
</dbReference>
<dbReference type="InterPro" id="IPR038371">
    <property type="entry name" value="Cu_polyphenol_OxRdtase_sf"/>
</dbReference>
<dbReference type="InterPro" id="IPR011324">
    <property type="entry name" value="Cytotoxic_necrot_fac-like_cat"/>
</dbReference>
<dbReference type="NCBIfam" id="TIGR00726">
    <property type="entry name" value="peptidoglycan editing factor PgeF"/>
    <property type="match status" value="1"/>
</dbReference>
<dbReference type="NCBIfam" id="NF007998">
    <property type="entry name" value="PRK10723.1"/>
    <property type="match status" value="1"/>
</dbReference>
<dbReference type="PANTHER" id="PTHR30616:SF2">
    <property type="entry name" value="PURINE NUCLEOSIDE PHOSPHORYLASE LACC1"/>
    <property type="match status" value="1"/>
</dbReference>
<dbReference type="PANTHER" id="PTHR30616">
    <property type="entry name" value="UNCHARACTERIZED PROTEIN YFIH"/>
    <property type="match status" value="1"/>
</dbReference>
<dbReference type="Pfam" id="PF02578">
    <property type="entry name" value="Cu-oxidase_4"/>
    <property type="match status" value="1"/>
</dbReference>
<dbReference type="SUPFAM" id="SSF64438">
    <property type="entry name" value="CNF1/YfiH-like putative cysteine hydrolases"/>
    <property type="match status" value="1"/>
</dbReference>
<protein>
    <recommendedName>
        <fullName evidence="6">Purine nucleoside phosphorylase YfiH</fullName>
        <ecNumber evidence="4">2.4.2.1</ecNumber>
    </recommendedName>
    <alternativeName>
        <fullName evidence="6">Adenosine deaminase YfiH</fullName>
        <ecNumber evidence="4">3.5.4.4</ecNumber>
    </alternativeName>
    <alternativeName>
        <fullName evidence="5">Polyphenol oxidase YfiH</fullName>
        <ecNumber evidence="2">1.10.3.-</ecNumber>
    </alternativeName>
    <alternativeName>
        <fullName evidence="6">S-methyl-5'-thioadenosine phosphorylase YfiH</fullName>
        <ecNumber evidence="4">2.4.2.28</ecNumber>
    </alternativeName>
</protein>
<reference key="1">
    <citation type="submission" date="1996-02" db="EMBL/GenBank/DDBJ databases">
        <authorList>
            <person name="Ogura T."/>
            <person name="Tomoyasu T."/>
        </authorList>
    </citation>
    <scope>NUCLEOTIDE SEQUENCE [GENOMIC DNA]</scope>
    <source>
        <strain>K12 / W3110 / ATCC 27325 / DSM 5911</strain>
    </source>
</reference>
<reference key="2">
    <citation type="journal article" date="1991" name="J. Bacteriol.">
        <title>Expression of ClpB, an analog of the ATP-dependent protease regulatory subunit in Escherichia coli, is controlled by a heat shock sigma factor (sigma 32).</title>
        <authorList>
            <person name="Kitagawa M."/>
            <person name="Wada C."/>
            <person name="Yoshioka S."/>
            <person name="Yura T."/>
        </authorList>
    </citation>
    <scope>NUCLEOTIDE SEQUENCE [GENOMIC DNA]</scope>
    <source>
        <strain>K12</strain>
    </source>
</reference>
<reference key="3">
    <citation type="journal article" date="1997" name="DNA Res.">
        <title>Construction of a contiguous 874-kb sequence of the Escherichia coli-K12 genome corresponding to 50.0-68.8 min on the linkage map and analysis of its sequence features.</title>
        <authorList>
            <person name="Yamamoto Y."/>
            <person name="Aiba H."/>
            <person name="Baba T."/>
            <person name="Hayashi K."/>
            <person name="Inada T."/>
            <person name="Isono K."/>
            <person name="Itoh T."/>
            <person name="Kimura S."/>
            <person name="Kitagawa M."/>
            <person name="Makino K."/>
            <person name="Miki T."/>
            <person name="Mitsuhashi N."/>
            <person name="Mizobuchi K."/>
            <person name="Mori H."/>
            <person name="Nakade S."/>
            <person name="Nakamura Y."/>
            <person name="Nashimoto H."/>
            <person name="Oshima T."/>
            <person name="Oyama S."/>
            <person name="Saito N."/>
            <person name="Sampei G."/>
            <person name="Satoh Y."/>
            <person name="Sivasundaram S."/>
            <person name="Tagami H."/>
            <person name="Takahashi H."/>
            <person name="Takeda J."/>
            <person name="Takemoto K."/>
            <person name="Uehara K."/>
            <person name="Wada C."/>
            <person name="Yamagata S."/>
            <person name="Horiuchi T."/>
        </authorList>
    </citation>
    <scope>NUCLEOTIDE SEQUENCE [LARGE SCALE GENOMIC DNA]</scope>
    <source>
        <strain>K12 / W3110 / ATCC 27325 / DSM 5911</strain>
    </source>
</reference>
<reference key="4">
    <citation type="journal article" date="1997" name="Science">
        <title>The complete genome sequence of Escherichia coli K-12.</title>
        <authorList>
            <person name="Blattner F.R."/>
            <person name="Plunkett G. III"/>
            <person name="Bloch C.A."/>
            <person name="Perna N.T."/>
            <person name="Burland V."/>
            <person name="Riley M."/>
            <person name="Collado-Vides J."/>
            <person name="Glasner J.D."/>
            <person name="Rode C.K."/>
            <person name="Mayhew G.F."/>
            <person name="Gregor J."/>
            <person name="Davis N.W."/>
            <person name="Kirkpatrick H.A."/>
            <person name="Goeden M.A."/>
            <person name="Rose D.J."/>
            <person name="Mau B."/>
            <person name="Shao Y."/>
        </authorList>
    </citation>
    <scope>NUCLEOTIDE SEQUENCE [LARGE SCALE GENOMIC DNA]</scope>
    <source>
        <strain>K12 / MG1655 / ATCC 47076</strain>
    </source>
</reference>
<reference key="5">
    <citation type="journal article" date="2006" name="Mol. Syst. Biol.">
        <title>Highly accurate genome sequences of Escherichia coli K-12 strains MG1655 and W3110.</title>
        <authorList>
            <person name="Hayashi K."/>
            <person name="Morooka N."/>
            <person name="Yamamoto Y."/>
            <person name="Fujita K."/>
            <person name="Isono K."/>
            <person name="Choi S."/>
            <person name="Ohtsubo E."/>
            <person name="Baba T."/>
            <person name="Wanner B.L."/>
            <person name="Mori H."/>
            <person name="Horiuchi T."/>
        </authorList>
    </citation>
    <scope>NUCLEOTIDE SEQUENCE [LARGE SCALE GENOMIC DNA]</scope>
    <source>
        <strain>K12 / W3110 / ATCC 27325 / DSM 5911</strain>
    </source>
</reference>
<reference key="6">
    <citation type="journal article" date="1991" name="J. Bacteriol.">
        <title>ClpB is the Escherichia coli heat shock protein F84.1.</title>
        <authorList>
            <person name="Squires C.L."/>
            <person name="Pedersen S."/>
            <person name="Ross B.M."/>
            <person name="Squires C."/>
        </authorList>
    </citation>
    <scope>NUCLEOTIDE SEQUENCE [GENOMIC DNA] OF 103-243</scope>
</reference>
<reference key="7">
    <citation type="journal article" date="2006" name="J. Biol. Chem.">
        <title>Novel polyphenol oxidase mined from a metagenome expression library of bovine rumen: biochemical properties, structural analysis, and phylogenetic relationships.</title>
        <authorList>
            <person name="Beloqui A."/>
            <person name="Pita M."/>
            <person name="Polaina J."/>
            <person name="Martinez-Arias A."/>
            <person name="Golyshina O.V."/>
            <person name="Zumarraga M."/>
            <person name="Yakimov M.M."/>
            <person name="Garcia-Arellano H."/>
            <person name="Alcalde M."/>
            <person name="Fernandez V.M."/>
            <person name="Elborough K."/>
            <person name="Andreu J.M."/>
            <person name="Ballesteros A."/>
            <person name="Plou F.J."/>
            <person name="Timmis K.N."/>
            <person name="Ferrer M."/>
            <person name="Golyshin P.N."/>
        </authorList>
    </citation>
    <scope>FUNCTION</scope>
    <scope>CATALYTIC ACTIVITY</scope>
    <scope>COFACTOR</scope>
    <scope>BIOPHYSICOCHEMICAL PROPERTIES</scope>
    <scope>SUBUNIT</scope>
    <source>
        <strain>K12</strain>
    </source>
</reference>
<reference key="8">
    <citation type="journal article" date="2010" name="Antimicrob. Agents Chemother.">
        <title>Antibiotic sensitivity profiles determined with an Escherichia coli gene knockout collection: generating an antibiotic bar code.</title>
        <authorList>
            <person name="Liu A."/>
            <person name="Tran L."/>
            <person name="Becket E."/>
            <person name="Lee K."/>
            <person name="Chinn L."/>
            <person name="Park E."/>
            <person name="Tran K."/>
            <person name="Miller J.H."/>
        </authorList>
    </citation>
    <scope>DISRUPTION PHENOTYPE</scope>
    <source>
        <strain>K12 / BW25113</strain>
    </source>
</reference>
<reference key="9">
    <citation type="submission" date="2005-05" db="PDB data bank">
        <title>Crystal structure of hypothetical UPF0124 protein yfiH (NP_417084.1) from Escherichia coli K12 at 1.54 A resolution.</title>
        <authorList>
            <consortium name="Joint center for structural genomics (JCSG)"/>
        </authorList>
    </citation>
    <scope>X-RAY CRYSTALLOGRAPHY (1.54 ANGSTROMS)</scope>
    <source>
        <strain>K12</strain>
    </source>
</reference>
<reference key="10">
    <citation type="journal article" date="2020" name="Cell">
        <title>FAMIN is a multifunctional purine enzyme enabling the purine nucleotide cycle.</title>
        <authorList>
            <person name="Cader M.Z."/>
            <person name="de Almeida Rodrigues R.P."/>
            <person name="West J.A."/>
            <person name="Sewell G.W."/>
            <person name="Md-Ibrahim M.N."/>
            <person name="Reikine S."/>
            <person name="Sirago G."/>
            <person name="Unger L.W."/>
            <person name="Inglesias-Romero A.B."/>
            <person name="Ramshorn K."/>
            <person name="Haag L.M."/>
            <person name="Saveljeva S."/>
            <person name="Ebel J.F."/>
            <person name="Rosenstiel P."/>
            <person name="Kaneider N.C."/>
            <person name="Lee J.C."/>
            <person name="Lawley T.D."/>
            <person name="Bradley A."/>
            <person name="Dougan G."/>
            <person name="Modis Y."/>
            <person name="Griffin J.L."/>
            <person name="Kaser A."/>
        </authorList>
    </citation>
    <scope>FUNCTION</scope>
    <scope>CATALYTIC ACTIVITY</scope>
</reference>
<organism>
    <name type="scientific">Escherichia coli (strain K12)</name>
    <dbReference type="NCBI Taxonomy" id="83333"/>
    <lineage>
        <taxon>Bacteria</taxon>
        <taxon>Pseudomonadati</taxon>
        <taxon>Pseudomonadota</taxon>
        <taxon>Gammaproteobacteria</taxon>
        <taxon>Enterobacterales</taxon>
        <taxon>Enterobacteriaceae</taxon>
        <taxon>Escherichia</taxon>
    </lineage>
</organism>
<gene>
    <name evidence="5 7" type="primary">yfiH</name>
    <name type="ordered locus">b2593</name>
    <name type="ordered locus">JW2575</name>
</gene>
<sequence length="243" mass="26339">MSKLIVPQWPQPKGVAACSSTRIGGVSLPPYDSLNLGAHCGDNPDHVEENRKRLFAAGNLPSKPVWLEQVHGKDVLKLTGEPYASKRADASYSNTPGTVCAVMTADCLPVLFCNRAGTEVAAAHAGWRGLCAGVLEETVSCFADNPENILAWLGPAIGPRAFEVGGEVREAFMAVDAKASAAFIQHGDKYLADIYQLARQRLANVGVEQIFGGDRCTYTENETFFSYRRDKTTGRMASFIWLI</sequence>